<sequence>MREYKIAAIPADGIGPEVIAAGLQVLEALEQRSGDFKIHTETFDWGSDYYKKHGVMMPADGLDKLKKFDAIFFGAVGAPDVPDHITLWGLRLPICQGFDQYANVRPTKILPGITPPLRNCGPGDLDWVIVRENSEGEYSGHGGRAHRGLPEEVGTEVAIFTRVGVTRIMRYAFKLAQARPRKLLTVVTKSNAQRHGMVMWDEIAAEVATEFPDVTWDKMLVDAMTVRMTLKPETLDTIVATNLHADILSDLAGALAGSLGVAPTANIDPERRFPSMFEPIHGSAFDITGKGIANPIATFWTAAQMLEHLGERDAAARLMGAVERVTEAGILTPDVGGTANTSQVTEAVCNAIAGSNII</sequence>
<gene>
    <name type="primary">ttuC'</name>
</gene>
<accession>O34295</accession>
<name>TTUC5_AGRVI</name>
<organism>
    <name type="scientific">Agrobacterium vitis</name>
    <name type="common">Rhizobium vitis</name>
    <dbReference type="NCBI Taxonomy" id="373"/>
    <lineage>
        <taxon>Bacteria</taxon>
        <taxon>Pseudomonadati</taxon>
        <taxon>Pseudomonadota</taxon>
        <taxon>Alphaproteobacteria</taxon>
        <taxon>Hyphomicrobiales</taxon>
        <taxon>Rhizobiaceae</taxon>
        <taxon>Rhizobium/Agrobacterium group</taxon>
        <taxon>Agrobacterium</taxon>
    </lineage>
</organism>
<dbReference type="EC" id="1.1.1.93" evidence="3"/>
<dbReference type="EC" id="4.1.1.73" evidence="3"/>
<dbReference type="EC" id="1.1.1.83" evidence="3"/>
<dbReference type="EMBL" id="AF010261">
    <property type="protein sequence ID" value="AAB65746.1"/>
    <property type="molecule type" value="Genomic_DNA"/>
</dbReference>
<dbReference type="RefSeq" id="WP_032489006.1">
    <property type="nucleotide sequence ID" value="NZ_AP023271.1"/>
</dbReference>
<dbReference type="SMR" id="O34295"/>
<dbReference type="UniPathway" id="UPA00839">
    <property type="reaction ID" value="UER00800"/>
</dbReference>
<dbReference type="UniPathway" id="UPA00839">
    <property type="reaction ID" value="UER00801"/>
</dbReference>
<dbReference type="UniPathway" id="UPA00839">
    <property type="reaction ID" value="UER00803"/>
</dbReference>
<dbReference type="GO" id="GO:0005737">
    <property type="term" value="C:cytoplasm"/>
    <property type="evidence" value="ECO:0007669"/>
    <property type="project" value="UniProtKB-SubCell"/>
</dbReference>
<dbReference type="GO" id="GO:0046553">
    <property type="term" value="F:D-malate dehydrogenase (decarboxylating) (NAD+) activity"/>
    <property type="evidence" value="ECO:0007669"/>
    <property type="project" value="UniProtKB-EC"/>
</dbReference>
<dbReference type="GO" id="GO:0000287">
    <property type="term" value="F:magnesium ion binding"/>
    <property type="evidence" value="ECO:0007669"/>
    <property type="project" value="InterPro"/>
</dbReference>
<dbReference type="GO" id="GO:0051287">
    <property type="term" value="F:NAD binding"/>
    <property type="evidence" value="ECO:0007669"/>
    <property type="project" value="InterPro"/>
</dbReference>
<dbReference type="GO" id="GO:0050319">
    <property type="term" value="F:tartrate decarboxylase activity"/>
    <property type="evidence" value="ECO:0007669"/>
    <property type="project" value="UniProtKB-EC"/>
</dbReference>
<dbReference type="GO" id="GO:0009027">
    <property type="term" value="F:tartrate dehydrogenase activity"/>
    <property type="evidence" value="ECO:0007669"/>
    <property type="project" value="UniProtKB-EC"/>
</dbReference>
<dbReference type="Gene3D" id="3.40.718.10">
    <property type="entry name" value="Isopropylmalate Dehydrogenase"/>
    <property type="match status" value="1"/>
</dbReference>
<dbReference type="InterPro" id="IPR050501">
    <property type="entry name" value="ICDH/IPMDH"/>
</dbReference>
<dbReference type="InterPro" id="IPR019818">
    <property type="entry name" value="IsoCit/isopropylmalate_DH_CS"/>
</dbReference>
<dbReference type="InterPro" id="IPR024084">
    <property type="entry name" value="IsoPropMal-DH-like_dom"/>
</dbReference>
<dbReference type="InterPro" id="IPR011829">
    <property type="entry name" value="TTC_DH"/>
</dbReference>
<dbReference type="NCBIfam" id="TIGR02089">
    <property type="entry name" value="TTC"/>
    <property type="match status" value="1"/>
</dbReference>
<dbReference type="PANTHER" id="PTHR43275">
    <property type="entry name" value="D-MALATE DEHYDROGENASE [DECARBOXYLATING]"/>
    <property type="match status" value="1"/>
</dbReference>
<dbReference type="PANTHER" id="PTHR43275:SF1">
    <property type="entry name" value="D-MALATE DEHYDROGENASE [DECARBOXYLATING]"/>
    <property type="match status" value="1"/>
</dbReference>
<dbReference type="Pfam" id="PF00180">
    <property type="entry name" value="Iso_dh"/>
    <property type="match status" value="1"/>
</dbReference>
<dbReference type="SMART" id="SM01329">
    <property type="entry name" value="Iso_dh"/>
    <property type="match status" value="1"/>
</dbReference>
<dbReference type="SUPFAM" id="SSF53659">
    <property type="entry name" value="Isocitrate/Isopropylmalate dehydrogenase-like"/>
    <property type="match status" value="1"/>
</dbReference>
<dbReference type="PROSITE" id="PS00470">
    <property type="entry name" value="IDH_IMDH"/>
    <property type="match status" value="1"/>
</dbReference>
<evidence type="ECO:0000250" key="1"/>
<evidence type="ECO:0000250" key="2">
    <source>
        <dbReference type="UniProtKB" id="P37412"/>
    </source>
</evidence>
<evidence type="ECO:0000250" key="3">
    <source>
        <dbReference type="UniProtKB" id="Q51945"/>
    </source>
</evidence>
<evidence type="ECO:0000305" key="4"/>
<reference key="1">
    <citation type="submission" date="1997-06" db="EMBL/GenBank/DDBJ databases">
        <authorList>
            <person name="Salomone J.-Y."/>
            <person name="Szegedi E."/>
            <person name="Cobanov P."/>
            <person name="Otten L."/>
        </authorList>
    </citation>
    <scope>NUCLEOTIDE SEQUENCE [GENOMIC DNA]</scope>
    <source>
        <strain>AB4</strain>
    </source>
</reference>
<geneLocation type="plasmid">
    <name>pTrAB4</name>
</geneLocation>
<proteinExistence type="evidence at transcript level"/>
<protein>
    <recommendedName>
        <fullName>Probable tartrate dehydrogenase/decarboxylase TtuC'</fullName>
        <shortName>TDH</shortName>
        <ecNumber evidence="3">1.1.1.93</ecNumber>
        <ecNumber evidence="3">4.1.1.73</ecNumber>
    </recommendedName>
    <alternativeName>
        <fullName>D-malate dehydrogenase [decarboxylating]</fullName>
        <ecNumber evidence="3">1.1.1.83</ecNumber>
    </alternativeName>
</protein>
<keyword id="KW-0963">Cytoplasm</keyword>
<keyword id="KW-0456">Lyase</keyword>
<keyword id="KW-0464">Manganese</keyword>
<keyword id="KW-0479">Metal-binding</keyword>
<keyword id="KW-0520">NAD</keyword>
<keyword id="KW-0560">Oxidoreductase</keyword>
<keyword id="KW-0614">Plasmid</keyword>
<comment type="function">
    <text evidence="3">Has multiple catalytic activities. Apart from catalyzing the oxidation of (+)-tartrate to oxaloglycolate, also converts meso-tartrate to D-glycerate and catalyzes the oxidative decarboxylation of D-malate to pyruvate.</text>
</comment>
<comment type="catalytic activity">
    <reaction evidence="3">
        <text>tartrate + NAD(+) = 2-hydroxy-3-oxosuccinate + NADH + H(+)</text>
        <dbReference type="Rhea" id="RHEA:18853"/>
        <dbReference type="ChEBI" id="CHEBI:15378"/>
        <dbReference type="ChEBI" id="CHEBI:30929"/>
        <dbReference type="ChEBI" id="CHEBI:57540"/>
        <dbReference type="ChEBI" id="CHEBI:57945"/>
        <dbReference type="ChEBI" id="CHEBI:58265"/>
        <dbReference type="EC" id="1.1.1.93"/>
    </reaction>
</comment>
<comment type="catalytic activity">
    <reaction evidence="3">
        <text>(2R,3S)-tartrate + NAD(+) = 2-hydroxy-3-oxosuccinate + NADH + H(+)</text>
        <dbReference type="Rhea" id="RHEA:16457"/>
        <dbReference type="ChEBI" id="CHEBI:15378"/>
        <dbReference type="ChEBI" id="CHEBI:30928"/>
        <dbReference type="ChEBI" id="CHEBI:57540"/>
        <dbReference type="ChEBI" id="CHEBI:57945"/>
        <dbReference type="ChEBI" id="CHEBI:58265"/>
        <dbReference type="EC" id="1.1.1.93"/>
    </reaction>
</comment>
<comment type="catalytic activity">
    <reaction evidence="3">
        <text>(2R,3R)-tartrate + NAD(+) = 2-hydroxy-3-oxosuccinate + NADH + H(+)</text>
        <dbReference type="Rhea" id="RHEA:15209"/>
        <dbReference type="ChEBI" id="CHEBI:15378"/>
        <dbReference type="ChEBI" id="CHEBI:30924"/>
        <dbReference type="ChEBI" id="CHEBI:57540"/>
        <dbReference type="ChEBI" id="CHEBI:57945"/>
        <dbReference type="ChEBI" id="CHEBI:58265"/>
        <dbReference type="EC" id="1.1.1.93"/>
    </reaction>
</comment>
<comment type="catalytic activity">
    <reaction evidence="3">
        <text>(2R,3R)-tartrate + H(+) = (R)-glycerate + CO2</text>
        <dbReference type="Rhea" id="RHEA:13317"/>
        <dbReference type="ChEBI" id="CHEBI:15378"/>
        <dbReference type="ChEBI" id="CHEBI:16526"/>
        <dbReference type="ChEBI" id="CHEBI:16659"/>
        <dbReference type="ChEBI" id="CHEBI:30924"/>
        <dbReference type="EC" id="4.1.1.73"/>
    </reaction>
</comment>
<comment type="catalytic activity">
    <reaction evidence="3">
        <text>(R)-malate + NAD(+) = pyruvate + CO2 + NADH</text>
        <dbReference type="Rhea" id="RHEA:18365"/>
        <dbReference type="ChEBI" id="CHEBI:15361"/>
        <dbReference type="ChEBI" id="CHEBI:15588"/>
        <dbReference type="ChEBI" id="CHEBI:16526"/>
        <dbReference type="ChEBI" id="CHEBI:57540"/>
        <dbReference type="ChEBI" id="CHEBI:57945"/>
        <dbReference type="EC" id="1.1.1.83"/>
    </reaction>
</comment>
<comment type="cofactor">
    <cofactor evidence="3">
        <name>Mg(2+)</name>
        <dbReference type="ChEBI" id="CHEBI:18420"/>
    </cofactor>
    <cofactor evidence="3">
        <name>Mn(2+)</name>
        <dbReference type="ChEBI" id="CHEBI:29035"/>
    </cofactor>
    <text evidence="2">Binds 1 Mg(2+) or Mn(2+) ion per subunit.</text>
</comment>
<comment type="cofactor">
    <cofactor evidence="3">
        <name>K(+)</name>
        <dbReference type="ChEBI" id="CHEBI:29103"/>
    </cofactor>
</comment>
<comment type="pathway">
    <text>Carbohydrate acid metabolism; tartrate degradation; 2-hydroxy-3-oxosuccinate from L-tartrate: step 1/1.</text>
</comment>
<comment type="pathway">
    <text>Carbohydrate acid metabolism; tartrate degradation; 2-hydroxy-3-oxosuccinate from meso-tartrate: step 1/1.</text>
</comment>
<comment type="pathway">
    <text>Carbohydrate acid metabolism; tartrate degradation; D-glycerate from L-tartrate: step 1/1.</text>
</comment>
<comment type="subcellular location">
    <subcellularLocation>
        <location evidence="1">Cytoplasm</location>
    </subcellularLocation>
</comment>
<comment type="induction">
    <text>By tartrate.</text>
</comment>
<comment type="similarity">
    <text evidence="4">Belongs to the isocitrate and isopropylmalate dehydrogenases family.</text>
</comment>
<feature type="chain" id="PRO_0000083817" description="Probable tartrate dehydrogenase/decarboxylase TtuC'">
    <location>
        <begin position="1"/>
        <end position="358"/>
    </location>
</feature>
<feature type="binding site" evidence="2">
    <location>
        <position position="222"/>
    </location>
    <ligand>
        <name>Mn(2+)</name>
        <dbReference type="ChEBI" id="CHEBI:29035"/>
    </ligand>
</feature>
<feature type="binding site" evidence="2">
    <location>
        <position position="246"/>
    </location>
    <ligand>
        <name>Mn(2+)</name>
        <dbReference type="ChEBI" id="CHEBI:29035"/>
    </ligand>
</feature>
<feature type="binding site" evidence="2">
    <location>
        <position position="250"/>
    </location>
    <ligand>
        <name>Mn(2+)</name>
        <dbReference type="ChEBI" id="CHEBI:29035"/>
    </ligand>
</feature>